<name>PG035_MONPV</name>
<dbReference type="EMBL" id="MT903340">
    <property type="status" value="NOT_ANNOTATED_CDS"/>
    <property type="molecule type" value="Genomic_DNA"/>
</dbReference>
<dbReference type="RefSeq" id="NP_536450.1">
    <property type="nucleotide sequence ID" value="NC_003310.1"/>
</dbReference>
<dbReference type="RefSeq" id="YP_010377018.1">
    <property type="nucleotide sequence ID" value="NC_063383.1"/>
</dbReference>
<dbReference type="PDB" id="8XY1">
    <property type="method" value="X-ray"/>
    <property type="resolution" value="2.58 A"/>
    <property type="chains" value="A/B/C/D/E/F=1-117"/>
</dbReference>
<dbReference type="PDB" id="8XY2">
    <property type="method" value="X-ray"/>
    <property type="resolution" value="2.24 A"/>
    <property type="chains" value="A/B/C/D=1-117"/>
</dbReference>
<dbReference type="PDBsum" id="8XY1"/>
<dbReference type="PDBsum" id="8XY2"/>
<dbReference type="SMR" id="P0DTN4"/>
<dbReference type="GeneID" id="72551432"/>
<dbReference type="GeneID" id="928890"/>
<dbReference type="Proteomes" id="UP000516359">
    <property type="component" value="Genome"/>
</dbReference>
<dbReference type="GO" id="GO:0052150">
    <property type="term" value="P:symbiont-mediated perturbation of host apoptosis"/>
    <property type="evidence" value="ECO:0007669"/>
    <property type="project" value="UniProtKB-KW"/>
</dbReference>
<dbReference type="GO" id="GO:0052031">
    <property type="term" value="P:symbiont-mediated perturbation of host defense response"/>
    <property type="evidence" value="ECO:0007669"/>
    <property type="project" value="InterPro"/>
</dbReference>
<dbReference type="GO" id="GO:0085034">
    <property type="term" value="P:symbiont-mediated suppression of host NF-kappaB cascade"/>
    <property type="evidence" value="ECO:0007669"/>
    <property type="project" value="UniProtKB-KW"/>
</dbReference>
<dbReference type="Gene3D" id="1.10.437.20">
    <property type="entry name" value="dsDNA poxvirus"/>
    <property type="match status" value="1"/>
</dbReference>
<dbReference type="InterPro" id="IPR009353">
    <property type="entry name" value="Orthopox_N1"/>
</dbReference>
<dbReference type="InterPro" id="IPR022819">
    <property type="entry name" value="Poxvirus_Bcl-2-like"/>
</dbReference>
<dbReference type="InterPro" id="IPR043018">
    <property type="entry name" value="Poxvirus_sf"/>
</dbReference>
<dbReference type="Pfam" id="PF06227">
    <property type="entry name" value="Poxv_Bcl-2-like"/>
    <property type="match status" value="1"/>
</dbReference>
<dbReference type="PIRSF" id="PIRSF003784">
    <property type="entry name" value="VAC_N1L"/>
    <property type="match status" value="1"/>
</dbReference>
<keyword id="KW-0002">3D-structure</keyword>
<keyword id="KW-0244">Early protein</keyword>
<keyword id="KW-0945">Host-virus interaction</keyword>
<keyword id="KW-1100">Inhibition of host NF-kappa-B by virus</keyword>
<keyword id="KW-1119">Modulation of host cell apoptosis by virus</keyword>
<keyword id="KW-1185">Reference proteome</keyword>
<keyword id="KW-0899">Viral immunoevasion</keyword>
<feature type="chain" id="PRO_0000457198" description="Protein OPG035">
    <location>
        <begin position="1"/>
        <end position="117"/>
    </location>
</feature>
<organism>
    <name type="scientific">Monkeypox virus</name>
    <dbReference type="NCBI Taxonomy" id="10244"/>
    <lineage>
        <taxon>Viruses</taxon>
        <taxon>Varidnaviria</taxon>
        <taxon>Bamfordvirae</taxon>
        <taxon>Nucleocytoviricota</taxon>
        <taxon>Pokkesviricetes</taxon>
        <taxon>Chitovirales</taxon>
        <taxon>Poxviridae</taxon>
        <taxon>Chordopoxvirinae</taxon>
        <taxon>Orthopoxvirus</taxon>
    </lineage>
</organism>
<comment type="function">
    <text evidence="1">Bcl-2-like protein which contributes to virulence by preventing host NF-kappa-B activation in response to pro-inflammatory stimuli such as TNF-alpha or IL1B.</text>
</comment>
<comment type="induction">
    <text evidence="1">Expressed in the early phase of the viral replicative cycle.</text>
</comment>
<comment type="similarity">
    <text evidence="2">Belongs to the poxviridae OPG035 family.</text>
</comment>
<evidence type="ECO:0000250" key="1">
    <source>
        <dbReference type="UniProtKB" id="P17361"/>
    </source>
</evidence>
<evidence type="ECO:0000305" key="2"/>
<organismHost>
    <name type="scientific">Cynomys gunnisoni</name>
    <name type="common">Gunnison's prairie dog</name>
    <name type="synonym">Spermophilus gunnisoni</name>
    <dbReference type="NCBI Taxonomy" id="45479"/>
</organismHost>
<organismHost>
    <name type="scientific">Cynomys leucurus</name>
    <name type="common">White-tailed prairie dog</name>
    <dbReference type="NCBI Taxonomy" id="99825"/>
</organismHost>
<organismHost>
    <name type="scientific">Cynomys ludovicianus</name>
    <name type="common">Black-tailed prairie dog</name>
    <dbReference type="NCBI Taxonomy" id="45480"/>
</organismHost>
<organismHost>
    <name type="scientific">Cynomys mexicanus</name>
    <name type="common">Mexican prairie dog</name>
    <dbReference type="NCBI Taxonomy" id="99826"/>
</organismHost>
<organismHost>
    <name type="scientific">Cynomys parvidens</name>
    <name type="common">Utah prairie dog</name>
    <dbReference type="NCBI Taxonomy" id="99827"/>
</organismHost>
<organismHost>
    <name type="scientific">Gliridae</name>
    <name type="common">dormice</name>
    <dbReference type="NCBI Taxonomy" id="30650"/>
</organismHost>
<organismHost>
    <name type="scientific">Heliosciurus ruwenzorii</name>
    <name type="common">Ruwenzori sun squirrel</name>
    <dbReference type="NCBI Taxonomy" id="226685"/>
</organismHost>
<organismHost>
    <name type="scientific">Homo sapiens</name>
    <name type="common">Human</name>
    <dbReference type="NCBI Taxonomy" id="9606"/>
</organismHost>
<organismHost>
    <name type="scientific">Mus musculus</name>
    <name type="common">Mouse</name>
    <dbReference type="NCBI Taxonomy" id="10090"/>
</organismHost>
<gene>
    <name type="primary">OPG035</name>
    <name type="synonym">P1L</name>
    <name type="ORF">MPXVgp023</name>
</gene>
<sequence length="117" mass="13976">MRTLLIRYILWRNDGDPSYYNDDFKKLILFDELVDDDDVCTLIKNMRMTLSDGPLLDRLNQPVNNVEDVKRMIAISAKVARDIGRRSEIRWEDSFTILFRMIEKYFDDLMTDLYGEK</sequence>
<reference key="1">
    <citation type="journal article" date="2022" name="J. Infect. Dis.">
        <title>Exportation of Monkeypox virus from the African continent.</title>
        <authorList>
            <person name="Mauldin M.R."/>
            <person name="McCollum A.M."/>
            <person name="Nakazawa Y.J."/>
            <person name="Mandra A."/>
            <person name="Whitehouse E.R."/>
            <person name="Davidson W."/>
            <person name="Zhao H."/>
            <person name="Gao J."/>
            <person name="Li Y."/>
            <person name="Doty J."/>
            <person name="Yinka-Ogunleye A."/>
            <person name="Akinpelu A."/>
            <person name="Aruna O."/>
            <person name="Naidoo D."/>
            <person name="Lewandowski K."/>
            <person name="Afrough B."/>
            <person name="Graham V."/>
            <person name="Aarons E."/>
            <person name="Hewson R."/>
            <person name="Vipond R."/>
            <person name="Dunning J."/>
            <person name="Chand M."/>
            <person name="Brown C."/>
            <person name="Cohen-Gihon I."/>
            <person name="Erez N."/>
            <person name="Shifman O."/>
            <person name="Israeli O."/>
            <person name="Sharon M."/>
            <person name="Schwartz E."/>
            <person name="Beth-Din A."/>
            <person name="Zvi A."/>
            <person name="Mak T.M."/>
            <person name="Ng Y.K."/>
            <person name="Cui L."/>
            <person name="Lin R.T.P."/>
            <person name="Olson V.A."/>
            <person name="Brooks T."/>
            <person name="Paran N."/>
            <person name="Ihekweazu C."/>
            <person name="Reynolds M.G."/>
        </authorList>
    </citation>
    <scope>NUCLEOTIDE SEQUENCE [LARGE SCALE GENOMIC DNA]</scope>
    <source>
        <strain>MPXV-M5312_HM12_Rivers</strain>
    </source>
</reference>
<proteinExistence type="evidence at protein level"/>
<accession>P0DTN4</accession>
<protein>
    <recommendedName>
        <fullName>Protein OPG035</fullName>
    </recommendedName>
    <alternativeName>
        <fullName>Protein N1</fullName>
    </alternativeName>
</protein>